<accession>O43572</accession>
<accession>B2R650</accession>
<accession>Q96AJ7</accession>
<dbReference type="EMBL" id="AF037439">
    <property type="protein sequence ID" value="AAB92260.1"/>
    <property type="molecule type" value="mRNA"/>
</dbReference>
<dbReference type="EMBL" id="AK312438">
    <property type="protein sequence ID" value="BAG35347.1"/>
    <property type="molecule type" value="mRNA"/>
</dbReference>
<dbReference type="EMBL" id="CH471212">
    <property type="protein sequence ID" value="EAW50913.1"/>
    <property type="molecule type" value="Genomic_DNA"/>
</dbReference>
<dbReference type="EMBL" id="BC017055">
    <property type="protein sequence ID" value="AAH17055.1"/>
    <property type="molecule type" value="mRNA"/>
</dbReference>
<dbReference type="CCDS" id="CCDS11214.1"/>
<dbReference type="RefSeq" id="NP_009133.2">
    <property type="nucleotide sequence ID" value="NM_007202.3"/>
</dbReference>
<dbReference type="PDB" id="3IM4">
    <property type="method" value="X-ray"/>
    <property type="resolution" value="2.28 A"/>
    <property type="chains" value="C=623-662"/>
</dbReference>
<dbReference type="PDB" id="3TMH">
    <property type="method" value="X-ray"/>
    <property type="resolution" value="3.80 A"/>
    <property type="chains" value="D/H/L=623-662"/>
</dbReference>
<dbReference type="PDBsum" id="3IM4"/>
<dbReference type="PDBsum" id="3TMH"/>
<dbReference type="SMR" id="O43572"/>
<dbReference type="BioGRID" id="116385">
    <property type="interactions" value="36"/>
</dbReference>
<dbReference type="DIP" id="DIP-48753N"/>
<dbReference type="FunCoup" id="O43572">
    <property type="interactions" value="3777"/>
</dbReference>
<dbReference type="IntAct" id="O43572">
    <property type="interactions" value="80"/>
</dbReference>
<dbReference type="MINT" id="O43572"/>
<dbReference type="STRING" id="9606.ENSP00000225737"/>
<dbReference type="GlyGen" id="O43572">
    <property type="glycosylation" value="1 site, 1 N-linked glycan (1 site)"/>
</dbReference>
<dbReference type="iPTMnet" id="O43572"/>
<dbReference type="PhosphoSitePlus" id="O43572"/>
<dbReference type="SwissPalm" id="O43572"/>
<dbReference type="BioMuta" id="AKAP10"/>
<dbReference type="jPOST" id="O43572"/>
<dbReference type="MassIVE" id="O43572"/>
<dbReference type="PaxDb" id="9606-ENSP00000225737"/>
<dbReference type="PeptideAtlas" id="O43572"/>
<dbReference type="ProteomicsDB" id="49061"/>
<dbReference type="Pumba" id="O43572"/>
<dbReference type="Antibodypedia" id="26069">
    <property type="antibodies" value="259 antibodies from 34 providers"/>
</dbReference>
<dbReference type="DNASU" id="11216"/>
<dbReference type="Ensembl" id="ENST00000225737.11">
    <property type="protein sequence ID" value="ENSP00000225737.6"/>
    <property type="gene ID" value="ENSG00000108599.15"/>
</dbReference>
<dbReference type="GeneID" id="11216"/>
<dbReference type="KEGG" id="hsa:11216"/>
<dbReference type="MANE-Select" id="ENST00000225737.11">
    <property type="protein sequence ID" value="ENSP00000225737.6"/>
    <property type="RefSeq nucleotide sequence ID" value="NM_007202.4"/>
    <property type="RefSeq protein sequence ID" value="NP_009133.2"/>
</dbReference>
<dbReference type="UCSC" id="uc002gwo.5">
    <property type="organism name" value="human"/>
</dbReference>
<dbReference type="AGR" id="HGNC:368"/>
<dbReference type="CTD" id="11216"/>
<dbReference type="DisGeNET" id="11216"/>
<dbReference type="GeneCards" id="AKAP10"/>
<dbReference type="HGNC" id="HGNC:368">
    <property type="gene designation" value="AKAP10"/>
</dbReference>
<dbReference type="HPA" id="ENSG00000108599">
    <property type="expression patterns" value="Low tissue specificity"/>
</dbReference>
<dbReference type="MalaCards" id="AKAP10"/>
<dbReference type="MIM" id="604694">
    <property type="type" value="gene"/>
</dbReference>
<dbReference type="neXtProt" id="NX_O43572"/>
<dbReference type="OpenTargets" id="ENSG00000108599"/>
<dbReference type="PharmGKB" id="PA24662"/>
<dbReference type="VEuPathDB" id="HostDB:ENSG00000108599"/>
<dbReference type="eggNOG" id="KOG3590">
    <property type="taxonomic scope" value="Eukaryota"/>
</dbReference>
<dbReference type="GeneTree" id="ENSGT00390000015077"/>
<dbReference type="InParanoid" id="O43572"/>
<dbReference type="OMA" id="EFHCKYQ"/>
<dbReference type="OrthoDB" id="5584247at2759"/>
<dbReference type="PAN-GO" id="O43572">
    <property type="GO annotations" value="3 GO annotations based on evolutionary models"/>
</dbReference>
<dbReference type="PhylomeDB" id="O43572"/>
<dbReference type="TreeFam" id="TF105409"/>
<dbReference type="PathwayCommons" id="O43572"/>
<dbReference type="Reactome" id="R-HSA-983231">
    <property type="pathway name" value="Factors involved in megakaryocyte development and platelet production"/>
</dbReference>
<dbReference type="SignaLink" id="O43572"/>
<dbReference type="BioGRID-ORCS" id="11216">
    <property type="hits" value="12 hits in 1160 CRISPR screens"/>
</dbReference>
<dbReference type="ChiTaRS" id="AKAP10">
    <property type="organism name" value="human"/>
</dbReference>
<dbReference type="EvolutionaryTrace" id="O43572"/>
<dbReference type="GeneWiki" id="AKAP10"/>
<dbReference type="GenomeRNAi" id="11216"/>
<dbReference type="Pharos" id="O43572">
    <property type="development level" value="Tbio"/>
</dbReference>
<dbReference type="PRO" id="PR:O43572"/>
<dbReference type="Proteomes" id="UP000005640">
    <property type="component" value="Chromosome 17"/>
</dbReference>
<dbReference type="RNAct" id="O43572">
    <property type="molecule type" value="protein"/>
</dbReference>
<dbReference type="Bgee" id="ENSG00000108599">
    <property type="expression patterns" value="Expressed in buccal mucosa cell and 196 other cell types or tissues"/>
</dbReference>
<dbReference type="ExpressionAtlas" id="O43572">
    <property type="expression patterns" value="baseline and differential"/>
</dbReference>
<dbReference type="GO" id="GO:0005829">
    <property type="term" value="C:cytosol"/>
    <property type="evidence" value="ECO:0000314"/>
    <property type="project" value="HPA"/>
</dbReference>
<dbReference type="GO" id="GO:0005739">
    <property type="term" value="C:mitochondrion"/>
    <property type="evidence" value="ECO:0006056"/>
    <property type="project" value="FlyBase"/>
</dbReference>
<dbReference type="GO" id="GO:0005886">
    <property type="term" value="C:plasma membrane"/>
    <property type="evidence" value="ECO:0000314"/>
    <property type="project" value="HPA"/>
</dbReference>
<dbReference type="GO" id="GO:0032991">
    <property type="term" value="C:protein-containing complex"/>
    <property type="evidence" value="ECO:0000314"/>
    <property type="project" value="UniProtKB"/>
</dbReference>
<dbReference type="GO" id="GO:0051018">
    <property type="term" value="F:protein kinase A binding"/>
    <property type="evidence" value="ECO:0000353"/>
    <property type="project" value="UniProtKB"/>
</dbReference>
<dbReference type="GO" id="GO:0008104">
    <property type="term" value="P:protein localization"/>
    <property type="evidence" value="ECO:0000318"/>
    <property type="project" value="GO_Central"/>
</dbReference>
<dbReference type="GO" id="GO:0007165">
    <property type="term" value="P:signal transduction"/>
    <property type="evidence" value="ECO:0000304"/>
    <property type="project" value="ProtInc"/>
</dbReference>
<dbReference type="CDD" id="cd12804">
    <property type="entry name" value="AKAP10_AKB"/>
    <property type="match status" value="1"/>
</dbReference>
<dbReference type="CDD" id="cd08735">
    <property type="entry name" value="RGS_AKAP2_1"/>
    <property type="match status" value="1"/>
</dbReference>
<dbReference type="CDD" id="cd08721">
    <property type="entry name" value="RGS_AKAP2_2"/>
    <property type="match status" value="1"/>
</dbReference>
<dbReference type="FunFam" id="1.10.167.10:FF:000018">
    <property type="entry name" value="A-kinase anchor protein 10, mitochondrial"/>
    <property type="match status" value="1"/>
</dbReference>
<dbReference type="FunFam" id="1.10.167.10:FF:000022">
    <property type="entry name" value="A-kinase anchor protein 10, mitochondrial"/>
    <property type="match status" value="1"/>
</dbReference>
<dbReference type="FunFam" id="1.10.167.10:FF:000005">
    <property type="entry name" value="Putative A-kinase anchor protein 10 mitochondrial"/>
    <property type="match status" value="1"/>
</dbReference>
<dbReference type="Gene3D" id="1.10.167.10">
    <property type="entry name" value="Regulator of G-protein Signalling 4, domain 2"/>
    <property type="match status" value="3"/>
</dbReference>
<dbReference type="InterPro" id="IPR037719">
    <property type="entry name" value="AKAP10_AKB_dom"/>
</dbReference>
<dbReference type="InterPro" id="IPR052246">
    <property type="entry name" value="Cell_Polariz_PKAAnc"/>
</dbReference>
<dbReference type="InterPro" id="IPR016137">
    <property type="entry name" value="RGS"/>
</dbReference>
<dbReference type="InterPro" id="IPR036305">
    <property type="entry name" value="RGS_sf"/>
</dbReference>
<dbReference type="InterPro" id="IPR044926">
    <property type="entry name" value="RGS_subdomain_2"/>
</dbReference>
<dbReference type="PANTHER" id="PTHR13155:SF1">
    <property type="entry name" value="A-KINASE ANCHOR PROTEIN 10, MITOCHONDRIAL"/>
    <property type="match status" value="1"/>
</dbReference>
<dbReference type="PANTHER" id="PTHR13155">
    <property type="entry name" value="A-KINASE ANCHOR PROTEINS"/>
    <property type="match status" value="1"/>
</dbReference>
<dbReference type="Pfam" id="PF00615">
    <property type="entry name" value="RGS"/>
    <property type="match status" value="2"/>
</dbReference>
<dbReference type="SMART" id="SM00315">
    <property type="entry name" value="RGS"/>
    <property type="match status" value="2"/>
</dbReference>
<dbReference type="SUPFAM" id="SSF48097">
    <property type="entry name" value="Regulator of G-protein signaling, RGS"/>
    <property type="match status" value="2"/>
</dbReference>
<dbReference type="PROSITE" id="PS50132">
    <property type="entry name" value="RGS"/>
    <property type="match status" value="2"/>
</dbReference>
<sequence length="662" mass="73818">MRGAGPSPRQSPRTLRPDPGPAMSFFRRKVKGKEQEKTSDVKSIKASISVHSPQKSTKNHALLEAAGPSHVAINAISANMDSFSSSRTATLKKQPSHMEAAHFGDLGRSCLDYQTQETKSSLSKTLEQVLHDTIVLPYFIQFMELRRMEHLVKFWLEAESFHSTTWSRIRAHSLNTVKQSSLAEPVSPSKKHETTASFLTDSLDKRLEDSGSAQLFMTHSEGIDLNNRTNSTQNHLLLSQECDSAHSLRLEMARAGTHQVSMETQESSSTLTVASRNSPASPLKELSGKLMKSIEQDAVNTFTKYISPDAAKPIPITEAMRNDIIARICGEDGQVDPNCFVLAQSIVFSAMEQEHFSEFLRSHHFCKYQIEVLTSGTVYLADILFCESALFYFSEYMEKEDAVNILQFWLAADNFQSQLAAKKGQYDGQEAQNDAMILYDKYFSLQATHPLGFDDVVRLEIESNICREGGPLPNCFTTPLRQAWTTMEKVFLPGFLSSNLYYKYLNDLIHSVRGDEFLGGNVSLTAPGSVGPPDESHPGSSDSSASQSSVKKASIKILKNFDEAIIVDAASLDPESLYQRTYAGKMTFGRVSDLGQFIRESEPEPDVRKSKGSMFSQAMKKWVQGNTDEAQEELAWKIAKMIVSDIMQQAQYDQPLEKSTKL</sequence>
<evidence type="ECO:0000250" key="1"/>
<evidence type="ECO:0000255" key="2"/>
<evidence type="ECO:0000255" key="3">
    <source>
        <dbReference type="PROSITE-ProRule" id="PRU00171"/>
    </source>
</evidence>
<evidence type="ECO:0000256" key="4">
    <source>
        <dbReference type="SAM" id="MobiDB-lite"/>
    </source>
</evidence>
<evidence type="ECO:0000269" key="5">
    <source>
    </source>
</evidence>
<evidence type="ECO:0000269" key="6">
    <source>
    </source>
</evidence>
<evidence type="ECO:0000305" key="7"/>
<evidence type="ECO:0007744" key="8">
    <source>
    </source>
</evidence>
<evidence type="ECO:0007744" key="9">
    <source>
    </source>
</evidence>
<evidence type="ECO:0007829" key="10">
    <source>
        <dbReference type="PDB" id="3IM4"/>
    </source>
</evidence>
<gene>
    <name type="primary">AKAP10</name>
</gene>
<proteinExistence type="evidence at protein level"/>
<protein>
    <recommendedName>
        <fullName>A-kinase anchor protein 10, mitochondrial</fullName>
        <shortName>AKAP-10</shortName>
    </recommendedName>
    <alternativeName>
        <fullName>Dual specificity A kinase-anchoring protein 2</fullName>
        <shortName>D-AKAP-2</shortName>
    </alternativeName>
    <alternativeName>
        <fullName>Protein kinase A-anchoring protein 10</fullName>
        <shortName>PRKA10</shortName>
    </alternativeName>
</protein>
<feature type="transit peptide" description="Mitochondrion" evidence="2">
    <location>
        <begin position="1"/>
        <end position="28"/>
    </location>
</feature>
<feature type="chain" id="PRO_0000030404" description="A-kinase anchor protein 10, mitochondrial">
    <location>
        <begin position="29"/>
        <end position="662"/>
    </location>
</feature>
<feature type="domain" description="RGS 1" evidence="3">
    <location>
        <begin position="125"/>
        <end position="369"/>
    </location>
</feature>
<feature type="domain" description="RGS 2" evidence="3">
    <location>
        <begin position="379"/>
        <end position="505"/>
    </location>
</feature>
<feature type="region of interest" description="Disordered" evidence="4">
    <location>
        <begin position="1"/>
        <end position="55"/>
    </location>
</feature>
<feature type="region of interest" description="Disordered" evidence="4">
    <location>
        <begin position="261"/>
        <end position="282"/>
    </location>
</feature>
<feature type="region of interest" description="Disordered" evidence="4">
    <location>
        <begin position="524"/>
        <end position="548"/>
    </location>
</feature>
<feature type="region of interest" description="PKA-RII subunit binding">
    <location>
        <begin position="634"/>
        <end position="647"/>
    </location>
</feature>
<feature type="compositionally biased region" description="Basic and acidic residues" evidence="4">
    <location>
        <begin position="32"/>
        <end position="43"/>
    </location>
</feature>
<feature type="compositionally biased region" description="Polar residues" evidence="4">
    <location>
        <begin position="261"/>
        <end position="280"/>
    </location>
</feature>
<feature type="modified residue" description="Phosphoserine" evidence="8">
    <location>
        <position position="52"/>
    </location>
</feature>
<feature type="modified residue" description="Phosphoserine" evidence="9">
    <location>
        <position position="189"/>
    </location>
</feature>
<feature type="modified residue" description="Phosphoserine" evidence="9">
    <location>
        <position position="281"/>
    </location>
</feature>
<feature type="sequence variant" id="VAR_024607" description="In dbSNP:rs2108978.">
    <original>R</original>
    <variation>H</variation>
    <location>
        <position position="249"/>
    </location>
</feature>
<feature type="sequence variant" id="VAR_024608" description="Associated with increased basal heart rate and decreased heart rate variability; dbSNP:rs203462." evidence="6">
    <original>I</original>
    <variation>V</variation>
    <location>
        <position position="646"/>
    </location>
</feature>
<feature type="sequence conflict" description="In Ref. 2; AAB92260." evidence="7" ref="2">
    <original>V</original>
    <variation>M</variation>
    <location>
        <position position="177"/>
    </location>
</feature>
<feature type="sequence conflict" description="In Ref. 2; AAB92260." evidence="7" ref="2">
    <original>L</original>
    <variation>P</variation>
    <location>
        <position position="524"/>
    </location>
</feature>
<feature type="helix" evidence="10">
    <location>
        <begin position="629"/>
        <end position="653"/>
    </location>
</feature>
<reference key="1">
    <citation type="journal article" date="2001" name="Proc. Natl. Acad. Sci. U.S.A.">
        <title>Cloning and mitochondrial localization of full-length D-AKAP2, a protein kinase A anchoring protein.</title>
        <authorList>
            <person name="Wang L."/>
            <person name="Sunahara R.K."/>
            <person name="Krumins A."/>
            <person name="Perkins G."/>
            <person name="Crochiere M.L."/>
            <person name="Mackey M."/>
            <person name="Bell S."/>
            <person name="Ellisman M.H."/>
            <person name="Taylor S.S."/>
        </authorList>
    </citation>
    <scope>NUCLEOTIDE SEQUENCE [MRNA]</scope>
    <scope>SUBCELLULAR LOCATION</scope>
    <source>
        <tissue>Brain</tissue>
    </source>
</reference>
<reference key="2">
    <citation type="submission" date="1997-12" db="EMBL/GenBank/DDBJ databases">
        <title>Homo sapiens protein kinase A anchoring protein with an RGS domain.</title>
        <authorList>
            <person name="Chatterjee T.K."/>
            <person name="Fisher R.A."/>
        </authorList>
    </citation>
    <scope>NUCLEOTIDE SEQUENCE [MRNA]</scope>
</reference>
<reference key="3">
    <citation type="journal article" date="2004" name="Nat. Genet.">
        <title>Complete sequencing and characterization of 21,243 full-length human cDNAs.</title>
        <authorList>
            <person name="Ota T."/>
            <person name="Suzuki Y."/>
            <person name="Nishikawa T."/>
            <person name="Otsuki T."/>
            <person name="Sugiyama T."/>
            <person name="Irie R."/>
            <person name="Wakamatsu A."/>
            <person name="Hayashi K."/>
            <person name="Sato H."/>
            <person name="Nagai K."/>
            <person name="Kimura K."/>
            <person name="Makita H."/>
            <person name="Sekine M."/>
            <person name="Obayashi M."/>
            <person name="Nishi T."/>
            <person name="Shibahara T."/>
            <person name="Tanaka T."/>
            <person name="Ishii S."/>
            <person name="Yamamoto J."/>
            <person name="Saito K."/>
            <person name="Kawai Y."/>
            <person name="Isono Y."/>
            <person name="Nakamura Y."/>
            <person name="Nagahari K."/>
            <person name="Murakami K."/>
            <person name="Yasuda T."/>
            <person name="Iwayanagi T."/>
            <person name="Wagatsuma M."/>
            <person name="Shiratori A."/>
            <person name="Sudo H."/>
            <person name="Hosoiri T."/>
            <person name="Kaku Y."/>
            <person name="Kodaira H."/>
            <person name="Kondo H."/>
            <person name="Sugawara M."/>
            <person name="Takahashi M."/>
            <person name="Kanda K."/>
            <person name="Yokoi T."/>
            <person name="Furuya T."/>
            <person name="Kikkawa E."/>
            <person name="Omura Y."/>
            <person name="Abe K."/>
            <person name="Kamihara K."/>
            <person name="Katsuta N."/>
            <person name="Sato K."/>
            <person name="Tanikawa M."/>
            <person name="Yamazaki M."/>
            <person name="Ninomiya K."/>
            <person name="Ishibashi T."/>
            <person name="Yamashita H."/>
            <person name="Murakawa K."/>
            <person name="Fujimori K."/>
            <person name="Tanai H."/>
            <person name="Kimata M."/>
            <person name="Watanabe M."/>
            <person name="Hiraoka S."/>
            <person name="Chiba Y."/>
            <person name="Ishida S."/>
            <person name="Ono Y."/>
            <person name="Takiguchi S."/>
            <person name="Watanabe S."/>
            <person name="Yosida M."/>
            <person name="Hotuta T."/>
            <person name="Kusano J."/>
            <person name="Kanehori K."/>
            <person name="Takahashi-Fujii A."/>
            <person name="Hara H."/>
            <person name="Tanase T.-O."/>
            <person name="Nomura Y."/>
            <person name="Togiya S."/>
            <person name="Komai F."/>
            <person name="Hara R."/>
            <person name="Takeuchi K."/>
            <person name="Arita M."/>
            <person name="Imose N."/>
            <person name="Musashino K."/>
            <person name="Yuuki H."/>
            <person name="Oshima A."/>
            <person name="Sasaki N."/>
            <person name="Aotsuka S."/>
            <person name="Yoshikawa Y."/>
            <person name="Matsunawa H."/>
            <person name="Ichihara T."/>
            <person name="Shiohata N."/>
            <person name="Sano S."/>
            <person name="Moriya S."/>
            <person name="Momiyama H."/>
            <person name="Satoh N."/>
            <person name="Takami S."/>
            <person name="Terashima Y."/>
            <person name="Suzuki O."/>
            <person name="Nakagawa S."/>
            <person name="Senoh A."/>
            <person name="Mizoguchi H."/>
            <person name="Goto Y."/>
            <person name="Shimizu F."/>
            <person name="Wakebe H."/>
            <person name="Hishigaki H."/>
            <person name="Watanabe T."/>
            <person name="Sugiyama A."/>
            <person name="Takemoto M."/>
            <person name="Kawakami B."/>
            <person name="Yamazaki M."/>
            <person name="Watanabe K."/>
            <person name="Kumagai A."/>
            <person name="Itakura S."/>
            <person name="Fukuzumi Y."/>
            <person name="Fujimori Y."/>
            <person name="Komiyama M."/>
            <person name="Tashiro H."/>
            <person name="Tanigami A."/>
            <person name="Fujiwara T."/>
            <person name="Ono T."/>
            <person name="Yamada K."/>
            <person name="Fujii Y."/>
            <person name="Ozaki K."/>
            <person name="Hirao M."/>
            <person name="Ohmori Y."/>
            <person name="Kawabata A."/>
            <person name="Hikiji T."/>
            <person name="Kobatake N."/>
            <person name="Inagaki H."/>
            <person name="Ikema Y."/>
            <person name="Okamoto S."/>
            <person name="Okitani R."/>
            <person name="Kawakami T."/>
            <person name="Noguchi S."/>
            <person name="Itoh T."/>
            <person name="Shigeta K."/>
            <person name="Senba T."/>
            <person name="Matsumura K."/>
            <person name="Nakajima Y."/>
            <person name="Mizuno T."/>
            <person name="Morinaga M."/>
            <person name="Sasaki M."/>
            <person name="Togashi T."/>
            <person name="Oyama M."/>
            <person name="Hata H."/>
            <person name="Watanabe M."/>
            <person name="Komatsu T."/>
            <person name="Mizushima-Sugano J."/>
            <person name="Satoh T."/>
            <person name="Shirai Y."/>
            <person name="Takahashi Y."/>
            <person name="Nakagawa K."/>
            <person name="Okumura K."/>
            <person name="Nagase T."/>
            <person name="Nomura N."/>
            <person name="Kikuchi H."/>
            <person name="Masuho Y."/>
            <person name="Yamashita R."/>
            <person name="Nakai K."/>
            <person name="Yada T."/>
            <person name="Nakamura Y."/>
            <person name="Ohara O."/>
            <person name="Isogai T."/>
            <person name="Sugano S."/>
        </authorList>
    </citation>
    <scope>NUCLEOTIDE SEQUENCE [LARGE SCALE MRNA]</scope>
    <source>
        <tissue>Brain</tissue>
    </source>
</reference>
<reference key="4">
    <citation type="submission" date="2005-07" db="EMBL/GenBank/DDBJ databases">
        <authorList>
            <person name="Mural R.J."/>
            <person name="Istrail S."/>
            <person name="Sutton G.G."/>
            <person name="Florea L."/>
            <person name="Halpern A.L."/>
            <person name="Mobarry C.M."/>
            <person name="Lippert R."/>
            <person name="Walenz B."/>
            <person name="Shatkay H."/>
            <person name="Dew I."/>
            <person name="Miller J.R."/>
            <person name="Flanigan M.J."/>
            <person name="Edwards N.J."/>
            <person name="Bolanos R."/>
            <person name="Fasulo D."/>
            <person name="Halldorsson B.V."/>
            <person name="Hannenhalli S."/>
            <person name="Turner R."/>
            <person name="Yooseph S."/>
            <person name="Lu F."/>
            <person name="Nusskern D.R."/>
            <person name="Shue B.C."/>
            <person name="Zheng X.H."/>
            <person name="Zhong F."/>
            <person name="Delcher A.L."/>
            <person name="Huson D.H."/>
            <person name="Kravitz S.A."/>
            <person name="Mouchard L."/>
            <person name="Reinert K."/>
            <person name="Remington K.A."/>
            <person name="Clark A.G."/>
            <person name="Waterman M.S."/>
            <person name="Eichler E.E."/>
            <person name="Adams M.D."/>
            <person name="Hunkapiller M.W."/>
            <person name="Myers E.W."/>
            <person name="Venter J.C."/>
        </authorList>
    </citation>
    <scope>NUCLEOTIDE SEQUENCE [LARGE SCALE GENOMIC DNA]</scope>
</reference>
<reference key="5">
    <citation type="journal article" date="2004" name="Genome Res.">
        <title>The status, quality, and expansion of the NIH full-length cDNA project: the Mammalian Gene Collection (MGC).</title>
        <authorList>
            <consortium name="The MGC Project Team"/>
        </authorList>
    </citation>
    <scope>NUCLEOTIDE SEQUENCE [LARGE SCALE MRNA]</scope>
    <source>
        <tissue>Lung</tissue>
    </source>
</reference>
<reference key="6">
    <citation type="journal article" date="2008" name="Mol. Cell">
        <title>Kinase-selective enrichment enables quantitative phosphoproteomics of the kinome across the cell cycle.</title>
        <authorList>
            <person name="Daub H."/>
            <person name="Olsen J.V."/>
            <person name="Bairlein M."/>
            <person name="Gnad F."/>
            <person name="Oppermann F.S."/>
            <person name="Korner R."/>
            <person name="Greff Z."/>
            <person name="Keri G."/>
            <person name="Stemmann O."/>
            <person name="Mann M."/>
        </authorList>
    </citation>
    <scope>PHOSPHORYLATION [LARGE SCALE ANALYSIS] AT SER-52</scope>
    <scope>IDENTIFICATION BY MASS SPECTROMETRY [LARGE SCALE ANALYSIS]</scope>
    <source>
        <tissue>Cervix carcinoma</tissue>
    </source>
</reference>
<reference key="7">
    <citation type="journal article" date="2008" name="Proc. Natl. Acad. Sci. U.S.A.">
        <title>A quantitative atlas of mitotic phosphorylation.</title>
        <authorList>
            <person name="Dephoure N."/>
            <person name="Zhou C."/>
            <person name="Villen J."/>
            <person name="Beausoleil S.A."/>
            <person name="Bakalarski C.E."/>
            <person name="Elledge S.J."/>
            <person name="Gygi S.P."/>
        </authorList>
    </citation>
    <scope>IDENTIFICATION BY MASS SPECTROMETRY [LARGE SCALE ANALYSIS]</scope>
    <source>
        <tissue>Cervix carcinoma</tissue>
    </source>
</reference>
<reference key="8">
    <citation type="journal article" date="2013" name="J. Proteome Res.">
        <title>Toward a comprehensive characterization of a human cancer cell phosphoproteome.</title>
        <authorList>
            <person name="Zhou H."/>
            <person name="Di Palma S."/>
            <person name="Preisinger C."/>
            <person name="Peng M."/>
            <person name="Polat A.N."/>
            <person name="Heck A.J."/>
            <person name="Mohammed S."/>
        </authorList>
    </citation>
    <scope>PHOSPHORYLATION [LARGE SCALE ANALYSIS] AT SER-189 AND SER-281</scope>
    <scope>IDENTIFICATION BY MASS SPECTROMETRY [LARGE SCALE ANALYSIS]</scope>
    <source>
        <tissue>Cervix carcinoma</tissue>
        <tissue>Erythroleukemia</tissue>
    </source>
</reference>
<reference key="9">
    <citation type="journal article" date="2007" name="Proc. Natl. Acad. Sci. U.S.A.">
        <title>Gene-trapped mouse embryonic stem cell-derived cardiac myocytes and human genetics implicate AKAP10 in heart rhythm regulation.</title>
        <authorList>
            <person name="Tingley W.G."/>
            <person name="Pawlikowska L."/>
            <person name="Zaroff J.G."/>
            <person name="Kim T."/>
            <person name="Nguyen T."/>
            <person name="Young S.G."/>
            <person name="Vranizan K."/>
            <person name="Kwok P.Y."/>
            <person name="Whooley M.A."/>
            <person name="Conklin B.R."/>
        </authorList>
    </citation>
    <scope>VARIANT VAL-646</scope>
</reference>
<keyword id="KW-0002">3D-structure</keyword>
<keyword id="KW-0963">Cytoplasm</keyword>
<keyword id="KW-0472">Membrane</keyword>
<keyword id="KW-0496">Mitochondrion</keyword>
<keyword id="KW-0597">Phosphoprotein</keyword>
<keyword id="KW-1267">Proteomics identification</keyword>
<keyword id="KW-1185">Reference proteome</keyword>
<keyword id="KW-0677">Repeat</keyword>
<keyword id="KW-0809">Transit peptide</keyword>
<comment type="function">
    <text evidence="1">Differentially targeted protein that binds to type I and II regulatory subunits of protein kinase A and anchors them to the mitochondria or the plasma membrane. Although the physiological relevance between PKA and AKAPS with mitochondria is not fully understood, one idea is that BAD, a proapoptotic member, is phosphorylated and inactivated by mitochondria-anchored PKA. It cannot be excluded too that it may facilitate PKA as well as G protein signal transduction, by acting as an adapter for assembling multiprotein complexes. With its RGS domain, it could lead to the interaction to G-alpha proteins, providing a link between the signaling machinery and the downstream kinase (By similarity).</text>
</comment>
<comment type="interaction">
    <interactant intactId="EBI-752153">
        <id>O43572</id>
    </interactant>
    <interactant intactId="EBI-1041635">
        <id>P00514</id>
        <label>PRKAR1A</label>
    </interactant>
    <organismsDiffer>true</organismsDiffer>
    <experiments>2</experiments>
</comment>
<comment type="subcellular location">
    <subcellularLocation>
        <location evidence="5">Mitochondrion</location>
    </subcellularLocation>
    <subcellularLocation>
        <location evidence="5">Membrane</location>
    </subcellularLocation>
    <subcellularLocation>
        <location evidence="5">Cytoplasm</location>
    </subcellularLocation>
    <text>Predominantly mitochondrial but also membrane associated and cytoplasmic.</text>
</comment>
<comment type="domain">
    <text>RII-alpha binding site, predicted to form an amphipathic helix, could participate in protein-protein interactions with a complementary surface on the R-subunit dimer.</text>
</comment>
<organism>
    <name type="scientific">Homo sapiens</name>
    <name type="common">Human</name>
    <dbReference type="NCBI Taxonomy" id="9606"/>
    <lineage>
        <taxon>Eukaryota</taxon>
        <taxon>Metazoa</taxon>
        <taxon>Chordata</taxon>
        <taxon>Craniata</taxon>
        <taxon>Vertebrata</taxon>
        <taxon>Euteleostomi</taxon>
        <taxon>Mammalia</taxon>
        <taxon>Eutheria</taxon>
        <taxon>Euarchontoglires</taxon>
        <taxon>Primates</taxon>
        <taxon>Haplorrhini</taxon>
        <taxon>Catarrhini</taxon>
        <taxon>Hominidae</taxon>
        <taxon>Homo</taxon>
    </lineage>
</organism>
<name>AKA10_HUMAN</name>